<reference key="1">
    <citation type="journal article" date="2006" name="Genome Res.">
        <title>Skewed genomic variability in strains of the toxigenic bacterial pathogen, Clostridium perfringens.</title>
        <authorList>
            <person name="Myers G.S.A."/>
            <person name="Rasko D.A."/>
            <person name="Cheung J.K."/>
            <person name="Ravel J."/>
            <person name="Seshadri R."/>
            <person name="DeBoy R.T."/>
            <person name="Ren Q."/>
            <person name="Varga J."/>
            <person name="Awad M.M."/>
            <person name="Brinkac L.M."/>
            <person name="Daugherty S.C."/>
            <person name="Haft D.H."/>
            <person name="Dodson R.J."/>
            <person name="Madupu R."/>
            <person name="Nelson W.C."/>
            <person name="Rosovitz M.J."/>
            <person name="Sullivan S.A."/>
            <person name="Khouri H."/>
            <person name="Dimitrov G.I."/>
            <person name="Watkins K.L."/>
            <person name="Mulligan S."/>
            <person name="Benton J."/>
            <person name="Radune D."/>
            <person name="Fisher D.J."/>
            <person name="Atkins H.S."/>
            <person name="Hiscox T."/>
            <person name="Jost B.H."/>
            <person name="Billington S.J."/>
            <person name="Songer J.G."/>
            <person name="McClane B.A."/>
            <person name="Titball R.W."/>
            <person name="Rood J.I."/>
            <person name="Melville S.B."/>
            <person name="Paulsen I.T."/>
        </authorList>
    </citation>
    <scope>NUCLEOTIDE SEQUENCE [LARGE SCALE GENOMIC DNA]</scope>
    <source>
        <strain>ATCC 13124 / DSM 756 / JCM 1290 / NCIMB 6125 / NCTC 8237 / S 107 / Type A</strain>
    </source>
</reference>
<keyword id="KW-0963">Cytoplasm</keyword>
<keyword id="KW-0328">Glycosyltransferase</keyword>
<keyword id="KW-0660">Purine salvage</keyword>
<keyword id="KW-0808">Transferase</keyword>
<evidence type="ECO:0000255" key="1">
    <source>
        <dbReference type="HAMAP-Rule" id="MF_00004"/>
    </source>
</evidence>
<comment type="function">
    <text evidence="1">Catalyzes a salvage reaction resulting in the formation of AMP, that is energically less costly than de novo synthesis.</text>
</comment>
<comment type="catalytic activity">
    <reaction evidence="1">
        <text>AMP + diphosphate = 5-phospho-alpha-D-ribose 1-diphosphate + adenine</text>
        <dbReference type="Rhea" id="RHEA:16609"/>
        <dbReference type="ChEBI" id="CHEBI:16708"/>
        <dbReference type="ChEBI" id="CHEBI:33019"/>
        <dbReference type="ChEBI" id="CHEBI:58017"/>
        <dbReference type="ChEBI" id="CHEBI:456215"/>
        <dbReference type="EC" id="2.4.2.7"/>
    </reaction>
</comment>
<comment type="pathway">
    <text evidence="1">Purine metabolism; AMP biosynthesis via salvage pathway; AMP from adenine: step 1/1.</text>
</comment>
<comment type="subunit">
    <text evidence="1">Homodimer.</text>
</comment>
<comment type="subcellular location">
    <subcellularLocation>
        <location evidence="1">Cytoplasm</location>
    </subcellularLocation>
</comment>
<comment type="similarity">
    <text evidence="1">Belongs to the purine/pyrimidine phosphoribosyltransferase family.</text>
</comment>
<accession>Q0TP22</accession>
<dbReference type="EC" id="2.4.2.7" evidence="1"/>
<dbReference type="EMBL" id="CP000246">
    <property type="protein sequence ID" value="ABG83902.1"/>
    <property type="molecule type" value="Genomic_DNA"/>
</dbReference>
<dbReference type="RefSeq" id="WP_003451591.1">
    <property type="nucleotide sequence ID" value="NC_008261.1"/>
</dbReference>
<dbReference type="SMR" id="Q0TP22"/>
<dbReference type="STRING" id="195103.CPF_2194"/>
<dbReference type="PaxDb" id="195103-CPF_2194"/>
<dbReference type="KEGG" id="cpf:CPF_2194"/>
<dbReference type="eggNOG" id="COG0503">
    <property type="taxonomic scope" value="Bacteria"/>
</dbReference>
<dbReference type="HOGENOM" id="CLU_063339_3_0_9"/>
<dbReference type="UniPathway" id="UPA00588">
    <property type="reaction ID" value="UER00646"/>
</dbReference>
<dbReference type="Proteomes" id="UP000001823">
    <property type="component" value="Chromosome"/>
</dbReference>
<dbReference type="GO" id="GO:0005737">
    <property type="term" value="C:cytoplasm"/>
    <property type="evidence" value="ECO:0007669"/>
    <property type="project" value="UniProtKB-SubCell"/>
</dbReference>
<dbReference type="GO" id="GO:0003999">
    <property type="term" value="F:adenine phosphoribosyltransferase activity"/>
    <property type="evidence" value="ECO:0007669"/>
    <property type="project" value="UniProtKB-UniRule"/>
</dbReference>
<dbReference type="GO" id="GO:0006168">
    <property type="term" value="P:adenine salvage"/>
    <property type="evidence" value="ECO:0007669"/>
    <property type="project" value="InterPro"/>
</dbReference>
<dbReference type="GO" id="GO:0044209">
    <property type="term" value="P:AMP salvage"/>
    <property type="evidence" value="ECO:0007669"/>
    <property type="project" value="UniProtKB-UniRule"/>
</dbReference>
<dbReference type="GO" id="GO:0006166">
    <property type="term" value="P:purine ribonucleoside salvage"/>
    <property type="evidence" value="ECO:0007669"/>
    <property type="project" value="UniProtKB-KW"/>
</dbReference>
<dbReference type="CDD" id="cd06223">
    <property type="entry name" value="PRTases_typeI"/>
    <property type="match status" value="1"/>
</dbReference>
<dbReference type="FunFam" id="3.40.50.2020:FF:000004">
    <property type="entry name" value="Adenine phosphoribosyltransferase"/>
    <property type="match status" value="1"/>
</dbReference>
<dbReference type="Gene3D" id="3.40.50.2020">
    <property type="match status" value="1"/>
</dbReference>
<dbReference type="HAMAP" id="MF_00004">
    <property type="entry name" value="Aden_phosphoribosyltr"/>
    <property type="match status" value="1"/>
</dbReference>
<dbReference type="InterPro" id="IPR005764">
    <property type="entry name" value="Ade_phspho_trans"/>
</dbReference>
<dbReference type="InterPro" id="IPR050120">
    <property type="entry name" value="Adenine_PRTase"/>
</dbReference>
<dbReference type="InterPro" id="IPR000836">
    <property type="entry name" value="PRibTrfase_dom"/>
</dbReference>
<dbReference type="InterPro" id="IPR029057">
    <property type="entry name" value="PRTase-like"/>
</dbReference>
<dbReference type="NCBIfam" id="TIGR01090">
    <property type="entry name" value="apt"/>
    <property type="match status" value="1"/>
</dbReference>
<dbReference type="NCBIfam" id="NF002633">
    <property type="entry name" value="PRK02304.1-2"/>
    <property type="match status" value="1"/>
</dbReference>
<dbReference type="NCBIfam" id="NF002634">
    <property type="entry name" value="PRK02304.1-3"/>
    <property type="match status" value="1"/>
</dbReference>
<dbReference type="NCBIfam" id="NF002636">
    <property type="entry name" value="PRK02304.1-5"/>
    <property type="match status" value="1"/>
</dbReference>
<dbReference type="PANTHER" id="PTHR11776">
    <property type="entry name" value="ADENINE PHOSPHORIBOSYLTRANSFERASE"/>
    <property type="match status" value="1"/>
</dbReference>
<dbReference type="PANTHER" id="PTHR11776:SF7">
    <property type="entry name" value="PHOSPHORIBOSYLTRANSFERASE DOMAIN-CONTAINING PROTEIN"/>
    <property type="match status" value="1"/>
</dbReference>
<dbReference type="Pfam" id="PF00156">
    <property type="entry name" value="Pribosyltran"/>
    <property type="match status" value="1"/>
</dbReference>
<dbReference type="SUPFAM" id="SSF53271">
    <property type="entry name" value="PRTase-like"/>
    <property type="match status" value="1"/>
</dbReference>
<name>APT_CLOP1</name>
<proteinExistence type="inferred from homology"/>
<feature type="chain" id="PRO_0000329342" description="Adenine phosphoribosyltransferase">
    <location>
        <begin position="1"/>
        <end position="172"/>
    </location>
</feature>
<gene>
    <name evidence="1" type="primary">apt</name>
    <name type="ordered locus">CPF_2194</name>
</gene>
<protein>
    <recommendedName>
        <fullName evidence="1">Adenine phosphoribosyltransferase</fullName>
        <shortName evidence="1">APRT</shortName>
        <ecNumber evidence="1">2.4.2.7</ecNumber>
    </recommendedName>
</protein>
<organism>
    <name type="scientific">Clostridium perfringens (strain ATCC 13124 / DSM 756 / JCM 1290 / NCIMB 6125 / NCTC 8237 / Type A)</name>
    <dbReference type="NCBI Taxonomy" id="195103"/>
    <lineage>
        <taxon>Bacteria</taxon>
        <taxon>Bacillati</taxon>
        <taxon>Bacillota</taxon>
        <taxon>Clostridia</taxon>
        <taxon>Eubacteriales</taxon>
        <taxon>Clostridiaceae</taxon>
        <taxon>Clostridium</taxon>
    </lineage>
</organism>
<sequence length="172" mass="18602">MSLKDKIRVIEDFPKKGISFKDITTLIADGEGLRDSVDQMAEFFKDKNIDVVVGPEARGFIFGVPVAYALGVGFIPVRKPGKLPGDTVRVEYDLEYGKDALEIHKDAIKPGMRVAIVDDLLATGGTIAAVAKLVEQAGGEVAGLAFTIELTELKGRDKLKGYEVTSLVDYDV</sequence>